<dbReference type="EC" id="6.1.1.14" evidence="1"/>
<dbReference type="EMBL" id="CP000919">
    <property type="protein sequence ID" value="ACO19166.1"/>
    <property type="molecule type" value="Genomic_DNA"/>
</dbReference>
<dbReference type="RefSeq" id="WP_000164779.1">
    <property type="nucleotide sequence ID" value="NC_012466.1"/>
</dbReference>
<dbReference type="SMR" id="C1CF57"/>
<dbReference type="KEGG" id="sjj:SPJ_1374"/>
<dbReference type="HOGENOM" id="CLU_007220_2_2_9"/>
<dbReference type="Proteomes" id="UP000002206">
    <property type="component" value="Chromosome"/>
</dbReference>
<dbReference type="GO" id="GO:0005829">
    <property type="term" value="C:cytosol"/>
    <property type="evidence" value="ECO:0007669"/>
    <property type="project" value="TreeGrafter"/>
</dbReference>
<dbReference type="GO" id="GO:0004814">
    <property type="term" value="F:arginine-tRNA ligase activity"/>
    <property type="evidence" value="ECO:0007669"/>
    <property type="project" value="InterPro"/>
</dbReference>
<dbReference type="GO" id="GO:0005524">
    <property type="term" value="F:ATP binding"/>
    <property type="evidence" value="ECO:0007669"/>
    <property type="project" value="UniProtKB-UniRule"/>
</dbReference>
<dbReference type="GO" id="GO:0004820">
    <property type="term" value="F:glycine-tRNA ligase activity"/>
    <property type="evidence" value="ECO:0007669"/>
    <property type="project" value="UniProtKB-UniRule"/>
</dbReference>
<dbReference type="GO" id="GO:0006420">
    <property type="term" value="P:arginyl-tRNA aminoacylation"/>
    <property type="evidence" value="ECO:0007669"/>
    <property type="project" value="InterPro"/>
</dbReference>
<dbReference type="GO" id="GO:0006426">
    <property type="term" value="P:glycyl-tRNA aminoacylation"/>
    <property type="evidence" value="ECO:0007669"/>
    <property type="project" value="UniProtKB-UniRule"/>
</dbReference>
<dbReference type="HAMAP" id="MF_00255">
    <property type="entry name" value="Gly_tRNA_synth_beta"/>
    <property type="match status" value="1"/>
</dbReference>
<dbReference type="InterPro" id="IPR008909">
    <property type="entry name" value="DALR_anticod-bd"/>
</dbReference>
<dbReference type="InterPro" id="IPR015944">
    <property type="entry name" value="Gly-tRNA-synth_bsu"/>
</dbReference>
<dbReference type="InterPro" id="IPR006194">
    <property type="entry name" value="Gly-tRNA-synth_heterodimer"/>
</dbReference>
<dbReference type="NCBIfam" id="TIGR00211">
    <property type="entry name" value="glyS"/>
    <property type="match status" value="1"/>
</dbReference>
<dbReference type="PANTHER" id="PTHR30075:SF2">
    <property type="entry name" value="GLYCINE--TRNA LIGASE, CHLOROPLASTIC_MITOCHONDRIAL 2"/>
    <property type="match status" value="1"/>
</dbReference>
<dbReference type="PANTHER" id="PTHR30075">
    <property type="entry name" value="GLYCYL-TRNA SYNTHETASE"/>
    <property type="match status" value="1"/>
</dbReference>
<dbReference type="Pfam" id="PF05746">
    <property type="entry name" value="DALR_1"/>
    <property type="match status" value="1"/>
</dbReference>
<dbReference type="Pfam" id="PF02092">
    <property type="entry name" value="tRNA_synt_2f"/>
    <property type="match status" value="1"/>
</dbReference>
<dbReference type="PRINTS" id="PR01045">
    <property type="entry name" value="TRNASYNTHGB"/>
</dbReference>
<dbReference type="SUPFAM" id="SSF109604">
    <property type="entry name" value="HD-domain/PDEase-like"/>
    <property type="match status" value="1"/>
</dbReference>
<dbReference type="PROSITE" id="PS50861">
    <property type="entry name" value="AA_TRNA_LIGASE_II_GLYAB"/>
    <property type="match status" value="1"/>
</dbReference>
<feature type="chain" id="PRO_1000197220" description="Glycine--tRNA ligase beta subunit">
    <location>
        <begin position="1"/>
        <end position="678"/>
    </location>
</feature>
<gene>
    <name evidence="1" type="primary">glyS</name>
    <name type="ordered locus">SPJ_1374</name>
</gene>
<comment type="catalytic activity">
    <reaction evidence="1">
        <text>tRNA(Gly) + glycine + ATP = glycyl-tRNA(Gly) + AMP + diphosphate</text>
        <dbReference type="Rhea" id="RHEA:16013"/>
        <dbReference type="Rhea" id="RHEA-COMP:9664"/>
        <dbReference type="Rhea" id="RHEA-COMP:9683"/>
        <dbReference type="ChEBI" id="CHEBI:30616"/>
        <dbReference type="ChEBI" id="CHEBI:33019"/>
        <dbReference type="ChEBI" id="CHEBI:57305"/>
        <dbReference type="ChEBI" id="CHEBI:78442"/>
        <dbReference type="ChEBI" id="CHEBI:78522"/>
        <dbReference type="ChEBI" id="CHEBI:456215"/>
        <dbReference type="EC" id="6.1.1.14"/>
    </reaction>
</comment>
<comment type="subunit">
    <text evidence="1">Tetramer of two alpha and two beta subunits.</text>
</comment>
<comment type="subcellular location">
    <subcellularLocation>
        <location evidence="1">Cytoplasm</location>
    </subcellularLocation>
</comment>
<comment type="similarity">
    <text evidence="1">Belongs to the class-II aminoacyl-tRNA synthetase family.</text>
</comment>
<organism>
    <name type="scientific">Streptococcus pneumoniae (strain JJA)</name>
    <dbReference type="NCBI Taxonomy" id="488222"/>
    <lineage>
        <taxon>Bacteria</taxon>
        <taxon>Bacillati</taxon>
        <taxon>Bacillota</taxon>
        <taxon>Bacilli</taxon>
        <taxon>Lactobacillales</taxon>
        <taxon>Streptococcaceae</taxon>
        <taxon>Streptococcus</taxon>
    </lineage>
</organism>
<evidence type="ECO:0000255" key="1">
    <source>
        <dbReference type="HAMAP-Rule" id="MF_00255"/>
    </source>
</evidence>
<proteinExistence type="inferred from homology"/>
<accession>C1CF57</accession>
<keyword id="KW-0030">Aminoacyl-tRNA synthetase</keyword>
<keyword id="KW-0067">ATP-binding</keyword>
<keyword id="KW-0963">Cytoplasm</keyword>
<keyword id="KW-0436">Ligase</keyword>
<keyword id="KW-0547">Nucleotide-binding</keyword>
<keyword id="KW-0648">Protein biosynthesis</keyword>
<name>SYGB_STRZJ</name>
<sequence>MTKNLLVELGLEELPAYVVTPSEKQLGEKMAAFLKGKRLSFEAIQTFSTPRRLAVRVTGLADKQSDLTEDFKGPAKKIALDSDGNFTKAAQGFVRGKGLTVEDIEFREIKGEEYVYVTKEEIGQAVEAIVPGIVDVLKSLTFPVSMHWAGNSFEYIRPVHTLTVLLDEQEFDLDFLDIKGSRVSRGHRFLGQETKIQSALSYEEDLRKQFVIADPCEREQMIVDQIKEIEAKHGVRIEIDADLLNEVLNLVEYPTAFMGSFDAKYLEVPEEVLVTSMKEHQRYFVVRDQDGKLLPNFISVRNGNAERLKNVIKGNEKVLVARLEDGEFFWREDQKLVISDLVEKLNNVTFHEKIGSLREHMIRTGQITVLLAEKASLSVDETVDLARAAAIYKFDLLTGMVGEFDELQGIMGEKYTLLAGETPAVAAAIREHYMPTSAEGELPESKVGAVLAIADKLDTILSFFSVGLIPSGSNDPYALRRATQGVVRILDAFGWHIAMDELIDSLYALKFDSLTYENKAEVMDFIKARVDKMMGSTPKDIKEAVLAGSNFVVADMLEAASALVEVSKEEDFKPSVESLSRAFNLAEKAEGVATVDSALFENDQEKALAEAVETLILSGPASQQLKQLFALSPVIDAFFENTMVMAEDQAVRQNRLAILSQLTKKAAKFACFNQINTK</sequence>
<reference key="1">
    <citation type="journal article" date="2010" name="Genome Biol.">
        <title>Structure and dynamics of the pan-genome of Streptococcus pneumoniae and closely related species.</title>
        <authorList>
            <person name="Donati C."/>
            <person name="Hiller N.L."/>
            <person name="Tettelin H."/>
            <person name="Muzzi A."/>
            <person name="Croucher N.J."/>
            <person name="Angiuoli S.V."/>
            <person name="Oggioni M."/>
            <person name="Dunning Hotopp J.C."/>
            <person name="Hu F.Z."/>
            <person name="Riley D.R."/>
            <person name="Covacci A."/>
            <person name="Mitchell T.J."/>
            <person name="Bentley S.D."/>
            <person name="Kilian M."/>
            <person name="Ehrlich G.D."/>
            <person name="Rappuoli R."/>
            <person name="Moxon E.R."/>
            <person name="Masignani V."/>
        </authorList>
    </citation>
    <scope>NUCLEOTIDE SEQUENCE [LARGE SCALE GENOMIC DNA]</scope>
    <source>
        <strain>JJA</strain>
    </source>
</reference>
<protein>
    <recommendedName>
        <fullName evidence="1">Glycine--tRNA ligase beta subunit</fullName>
        <ecNumber evidence="1">6.1.1.14</ecNumber>
    </recommendedName>
    <alternativeName>
        <fullName evidence="1">Glycyl-tRNA synthetase beta subunit</fullName>
        <shortName evidence="1">GlyRS</shortName>
    </alternativeName>
</protein>